<feature type="chain" id="PRO_0000411450" description="Probable dipeptidase A">
    <location>
        <begin position="1"/>
        <end position="465"/>
    </location>
</feature>
<feature type="active site" evidence="1">
    <location>
        <position position="3"/>
    </location>
</feature>
<accession>P0DD25</accession>
<accession>Q878G9</accession>
<accession>Q8K848</accession>
<organism>
    <name type="scientific">Streptococcus pyogenes serotype M3 (strain SSI-1)</name>
    <dbReference type="NCBI Taxonomy" id="193567"/>
    <lineage>
        <taxon>Bacteria</taxon>
        <taxon>Bacillati</taxon>
        <taxon>Bacillota</taxon>
        <taxon>Bacilli</taxon>
        <taxon>Lactobacillales</taxon>
        <taxon>Streptococcaceae</taxon>
        <taxon>Streptococcus</taxon>
    </lineage>
</organism>
<gene>
    <name type="primary">pepDA</name>
    <name type="ordered locus">SPs1390</name>
</gene>
<keyword id="KW-0224">Dipeptidase</keyword>
<keyword id="KW-0378">Hydrolase</keyword>
<keyword id="KW-0645">Protease</keyword>
<dbReference type="EC" id="3.4.13.19"/>
<dbReference type="EMBL" id="BA000034">
    <property type="protein sequence ID" value="BAC64485.1"/>
    <property type="status" value="ALT_INIT"/>
    <property type="molecule type" value="Genomic_DNA"/>
</dbReference>
<dbReference type="RefSeq" id="WP_011054318.1">
    <property type="nucleotide sequence ID" value="NC_004606.1"/>
</dbReference>
<dbReference type="SMR" id="P0DD25"/>
<dbReference type="MEROPS" id="C69.001"/>
<dbReference type="KEGG" id="sps:SPs1390"/>
<dbReference type="HOGENOM" id="CLU_014823_4_2_9"/>
<dbReference type="GO" id="GO:0070004">
    <property type="term" value="F:cysteine-type exopeptidase activity"/>
    <property type="evidence" value="ECO:0007669"/>
    <property type="project" value="InterPro"/>
</dbReference>
<dbReference type="GO" id="GO:0016805">
    <property type="term" value="F:dipeptidase activity"/>
    <property type="evidence" value="ECO:0007669"/>
    <property type="project" value="UniProtKB-KW"/>
</dbReference>
<dbReference type="GO" id="GO:0006508">
    <property type="term" value="P:proteolysis"/>
    <property type="evidence" value="ECO:0007669"/>
    <property type="project" value="UniProtKB-KW"/>
</dbReference>
<dbReference type="Gene3D" id="3.60.60.10">
    <property type="entry name" value="Penicillin V Acylase, Chain A"/>
    <property type="match status" value="1"/>
</dbReference>
<dbReference type="InterPro" id="IPR047804">
    <property type="entry name" value="C69_dipept_A-like"/>
</dbReference>
<dbReference type="InterPro" id="IPR005322">
    <property type="entry name" value="Peptidase_C69"/>
</dbReference>
<dbReference type="NCBIfam" id="NF033678">
    <property type="entry name" value="C69_fam_dipept"/>
    <property type="match status" value="1"/>
</dbReference>
<dbReference type="PANTHER" id="PTHR12994:SF17">
    <property type="entry name" value="LD30995P"/>
    <property type="match status" value="1"/>
</dbReference>
<dbReference type="PANTHER" id="PTHR12994">
    <property type="entry name" value="SECERNIN"/>
    <property type="match status" value="1"/>
</dbReference>
<dbReference type="Pfam" id="PF03577">
    <property type="entry name" value="Peptidase_C69"/>
    <property type="match status" value="1"/>
</dbReference>
<sequence length="465" mass="52905">MACTTILVGKKASYDGSTMVARTEDSQNGDFTPKKMIVVKPEDQPRHYRSVQSSFEMDLPDNPMTYTSVPDALGKDGIWAEAGVNEANVAMSATETITTNSRVLGADPLVASGIGEEDMVTLVLPYIRSAREGVLRLGAILEDYGTYESNGVAFSDEHDIWWLETIGGHHWIARRVPDDAYVTNPNQFGIDHFEFNNPEDYLCSADLKDFIDTYHLDLTYSHEHFNPRYAFGSQRDKDRQYNTPRVWIMQKFLNPEIVQDPRSFALAWCQKPYRKITVEDVKYVLSSHYQDTVYDPYGSEGTPVSKKVFRPIGINRTSQTAILHIRPNKPQEIAAIQWMAYGSMPFNTMVPFFTQVKTIPDYFANTYENVSTDNFYWTNRLIAALADPHYNHHETDLDNYLEETMAKGHAMLHAVEAQLLAGETVDLEEENQKMSDYVQGETQTLLNKILFDASNLMTNRFSLSD</sequence>
<evidence type="ECO:0000255" key="1"/>
<evidence type="ECO:0000305" key="2"/>
<name>PEPDA_STRPQ</name>
<protein>
    <recommendedName>
        <fullName>Probable dipeptidase A</fullName>
        <ecNumber>3.4.13.19</ecNumber>
    </recommendedName>
</protein>
<reference key="1">
    <citation type="journal article" date="2003" name="Genome Res.">
        <title>Genome sequence of an M3 strain of Streptococcus pyogenes reveals a large-scale genomic rearrangement in invasive strains and new insights into phage evolution.</title>
        <authorList>
            <person name="Nakagawa I."/>
            <person name="Kurokawa K."/>
            <person name="Yamashita A."/>
            <person name="Nakata M."/>
            <person name="Tomiyasu Y."/>
            <person name="Okahashi N."/>
            <person name="Kawabata S."/>
            <person name="Yamazaki K."/>
            <person name="Shiba T."/>
            <person name="Yasunaga T."/>
            <person name="Hayashi H."/>
            <person name="Hattori M."/>
            <person name="Hamada S."/>
        </authorList>
    </citation>
    <scope>NUCLEOTIDE SEQUENCE [LARGE SCALE GENOMIC DNA]</scope>
    <source>
        <strain>SSI-1</strain>
    </source>
</reference>
<proteinExistence type="inferred from homology"/>
<comment type="catalytic activity">
    <reaction>
        <text>an L-aminoacyl-L-amino acid + H2O = 2 an L-alpha-amino acid</text>
        <dbReference type="Rhea" id="RHEA:48940"/>
        <dbReference type="ChEBI" id="CHEBI:15377"/>
        <dbReference type="ChEBI" id="CHEBI:59869"/>
        <dbReference type="ChEBI" id="CHEBI:77460"/>
        <dbReference type="EC" id="3.4.13.19"/>
    </reaction>
</comment>
<comment type="similarity">
    <text evidence="2">Belongs to the peptidase C69 family.</text>
</comment>
<comment type="sequence caution" evidence="2">
    <conflict type="erroneous initiation">
        <sequence resource="EMBL-CDS" id="BAC64485"/>
    </conflict>
</comment>